<comment type="function">
    <text evidence="1">This protein binds to the 23S rRNA, and is important in its secondary structure. It is located near the subunit interface in the base of the L7/L12 stalk, and near the tRNA binding site of the peptidyltransferase center.</text>
</comment>
<comment type="subunit">
    <text evidence="1">Part of the 50S ribosomal subunit.</text>
</comment>
<comment type="similarity">
    <text evidence="1">Belongs to the universal ribosomal protein uL6 family.</text>
</comment>
<name>RL6_THENN</name>
<sequence length="184" mass="20731">MSRLAKKPINIPQGVTVEVNDGTVKVRGPKGELTQDFLPYVKIEIEDGKVWIRPNEAQVRRKSDWRKVKMFQGTYWSLIRNMVIGVTEGYKKELEIVGIGYRAQLQGNTLVMNLGYAHPVVYEIPSDVKVEVPAPNRIVVSGIDKQRVGQVAAEIRAFRPPNVYTGKGIRYVGEVVRQKEGKKA</sequence>
<keyword id="KW-0687">Ribonucleoprotein</keyword>
<keyword id="KW-0689">Ribosomal protein</keyword>
<keyword id="KW-0694">RNA-binding</keyword>
<keyword id="KW-0699">rRNA-binding</keyword>
<gene>
    <name evidence="1" type="primary">rplF</name>
    <name type="ordered locus">CTN_1008</name>
</gene>
<feature type="chain" id="PRO_1000166837" description="Large ribosomal subunit protein uL6">
    <location>
        <begin position="1"/>
        <end position="184"/>
    </location>
</feature>
<reference key="1">
    <citation type="submission" date="2007-11" db="EMBL/GenBank/DDBJ databases">
        <title>The genome sequence of the hyperthermophilic bacterium Thermotoga neapolitana.</title>
        <authorList>
            <person name="Lim S.K."/>
            <person name="Kim J.S."/>
            <person name="Cha S.H."/>
            <person name="Park B.C."/>
            <person name="Lee D.S."/>
            <person name="Tae H.S."/>
            <person name="Kim S.-J."/>
            <person name="Kim J.J."/>
            <person name="Park K.J."/>
            <person name="Lee S.Y."/>
        </authorList>
    </citation>
    <scope>NUCLEOTIDE SEQUENCE [LARGE SCALE GENOMIC DNA]</scope>
    <source>
        <strain>ATCC 49049 / DSM 4359 / NBRC 107923 / NS-E</strain>
    </source>
</reference>
<proteinExistence type="inferred from homology"/>
<protein>
    <recommendedName>
        <fullName evidence="1">Large ribosomal subunit protein uL6</fullName>
    </recommendedName>
    <alternativeName>
        <fullName evidence="2">50S ribosomal protein L6</fullName>
    </alternativeName>
</protein>
<organism>
    <name type="scientific">Thermotoga neapolitana (strain ATCC 49049 / DSM 4359 / NBRC 107923 / NS-E)</name>
    <dbReference type="NCBI Taxonomy" id="309803"/>
    <lineage>
        <taxon>Bacteria</taxon>
        <taxon>Thermotogati</taxon>
        <taxon>Thermotogota</taxon>
        <taxon>Thermotogae</taxon>
        <taxon>Thermotogales</taxon>
        <taxon>Thermotogaceae</taxon>
        <taxon>Thermotoga</taxon>
    </lineage>
</organism>
<evidence type="ECO:0000255" key="1">
    <source>
        <dbReference type="HAMAP-Rule" id="MF_01365"/>
    </source>
</evidence>
<evidence type="ECO:0000305" key="2"/>
<accession>B9K8A1</accession>
<dbReference type="EMBL" id="CP000916">
    <property type="protein sequence ID" value="ACM23184.1"/>
    <property type="molecule type" value="Genomic_DNA"/>
</dbReference>
<dbReference type="RefSeq" id="WP_015919500.1">
    <property type="nucleotide sequence ID" value="NC_011978.1"/>
</dbReference>
<dbReference type="SMR" id="B9K8A1"/>
<dbReference type="STRING" id="309803.CTN_1008"/>
<dbReference type="KEGG" id="tna:CTN_1008"/>
<dbReference type="eggNOG" id="COG0097">
    <property type="taxonomic scope" value="Bacteria"/>
</dbReference>
<dbReference type="HOGENOM" id="CLU_065464_1_2_0"/>
<dbReference type="Proteomes" id="UP000000445">
    <property type="component" value="Chromosome"/>
</dbReference>
<dbReference type="GO" id="GO:0022625">
    <property type="term" value="C:cytosolic large ribosomal subunit"/>
    <property type="evidence" value="ECO:0007669"/>
    <property type="project" value="TreeGrafter"/>
</dbReference>
<dbReference type="GO" id="GO:0019843">
    <property type="term" value="F:rRNA binding"/>
    <property type="evidence" value="ECO:0007669"/>
    <property type="project" value="UniProtKB-UniRule"/>
</dbReference>
<dbReference type="GO" id="GO:0003735">
    <property type="term" value="F:structural constituent of ribosome"/>
    <property type="evidence" value="ECO:0007669"/>
    <property type="project" value="InterPro"/>
</dbReference>
<dbReference type="GO" id="GO:0002181">
    <property type="term" value="P:cytoplasmic translation"/>
    <property type="evidence" value="ECO:0007669"/>
    <property type="project" value="TreeGrafter"/>
</dbReference>
<dbReference type="FunFam" id="3.90.930.12:FF:000001">
    <property type="entry name" value="50S ribosomal protein L6"/>
    <property type="match status" value="1"/>
</dbReference>
<dbReference type="FunFam" id="3.90.930.12:FF:000002">
    <property type="entry name" value="50S ribosomal protein L6"/>
    <property type="match status" value="1"/>
</dbReference>
<dbReference type="Gene3D" id="3.90.930.12">
    <property type="entry name" value="Ribosomal protein L6, alpha-beta domain"/>
    <property type="match status" value="2"/>
</dbReference>
<dbReference type="HAMAP" id="MF_01365_B">
    <property type="entry name" value="Ribosomal_uL6_B"/>
    <property type="match status" value="1"/>
</dbReference>
<dbReference type="InterPro" id="IPR000702">
    <property type="entry name" value="Ribosomal_uL6-like"/>
</dbReference>
<dbReference type="InterPro" id="IPR036789">
    <property type="entry name" value="Ribosomal_uL6-like_a/b-dom_sf"/>
</dbReference>
<dbReference type="InterPro" id="IPR020040">
    <property type="entry name" value="Ribosomal_uL6_a/b-dom"/>
</dbReference>
<dbReference type="InterPro" id="IPR019906">
    <property type="entry name" value="Ribosomal_uL6_bac-type"/>
</dbReference>
<dbReference type="NCBIfam" id="TIGR03654">
    <property type="entry name" value="L6_bact"/>
    <property type="match status" value="1"/>
</dbReference>
<dbReference type="PANTHER" id="PTHR11655">
    <property type="entry name" value="60S/50S RIBOSOMAL PROTEIN L6/L9"/>
    <property type="match status" value="1"/>
</dbReference>
<dbReference type="PANTHER" id="PTHR11655:SF14">
    <property type="entry name" value="LARGE RIBOSOMAL SUBUNIT PROTEIN UL6M"/>
    <property type="match status" value="1"/>
</dbReference>
<dbReference type="Pfam" id="PF00347">
    <property type="entry name" value="Ribosomal_L6"/>
    <property type="match status" value="2"/>
</dbReference>
<dbReference type="PIRSF" id="PIRSF002162">
    <property type="entry name" value="Ribosomal_L6"/>
    <property type="match status" value="1"/>
</dbReference>
<dbReference type="PRINTS" id="PR00059">
    <property type="entry name" value="RIBOSOMALL6"/>
</dbReference>
<dbReference type="SUPFAM" id="SSF56053">
    <property type="entry name" value="Ribosomal protein L6"/>
    <property type="match status" value="2"/>
</dbReference>